<gene>
    <name evidence="10" type="primary">ptc-3</name>
    <name evidence="10" type="ORF">Y110A2AL.8</name>
</gene>
<dbReference type="EMBL" id="BX284602">
    <property type="protein sequence ID" value="CCD72983.1"/>
    <property type="molecule type" value="Genomic_DNA"/>
</dbReference>
<dbReference type="EMBL" id="BX284602">
    <property type="protein sequence ID" value="CCD72978.1"/>
    <property type="molecule type" value="Genomic_DNA"/>
</dbReference>
<dbReference type="EMBL" id="BX284602">
    <property type="protein sequence ID" value="CCD72979.1"/>
    <property type="molecule type" value="Genomic_DNA"/>
</dbReference>
<dbReference type="RefSeq" id="NP_001122650.1">
    <molecule id="H2L0G5-1"/>
    <property type="nucleotide sequence ID" value="NM_001129178.3"/>
</dbReference>
<dbReference type="RefSeq" id="NP_494383.2">
    <molecule id="H2L0G5-3"/>
    <property type="nucleotide sequence ID" value="NM_061982.8"/>
</dbReference>
<dbReference type="RefSeq" id="NP_494384.2">
    <molecule id="H2L0G5-2"/>
    <property type="nucleotide sequence ID" value="NM_061983.9"/>
</dbReference>
<dbReference type="SMR" id="H2L0G5"/>
<dbReference type="FunCoup" id="H2L0G5">
    <property type="interactions" value="529"/>
</dbReference>
<dbReference type="STRING" id="6239.Y110A2AL.8c.2"/>
<dbReference type="GlyCosmos" id="H2L0G5">
    <property type="glycosylation" value="4 sites, No reported glycans"/>
</dbReference>
<dbReference type="PaxDb" id="6239-Y110A2AL.8c"/>
<dbReference type="PeptideAtlas" id="H2L0G5"/>
<dbReference type="EnsemblMetazoa" id="Y110A2AL.8a.1">
    <molecule id="H2L0G5-2"/>
    <property type="protein sequence ID" value="Y110A2AL.8a.1"/>
    <property type="gene ID" value="WBGene00004210"/>
</dbReference>
<dbReference type="EnsemblMetazoa" id="Y110A2AL.8b.1">
    <molecule id="H2L0G5-3"/>
    <property type="protein sequence ID" value="Y110A2AL.8b.1"/>
    <property type="gene ID" value="WBGene00004210"/>
</dbReference>
<dbReference type="EnsemblMetazoa" id="Y110A2AL.8c.1">
    <molecule id="H2L0G5-1"/>
    <property type="protein sequence ID" value="Y110A2AL.8c.1"/>
    <property type="gene ID" value="WBGene00004210"/>
</dbReference>
<dbReference type="GeneID" id="173631"/>
<dbReference type="KEGG" id="cel:CELE_Y110A2AL.8"/>
<dbReference type="UCSC" id="Y110A2AL.8a">
    <property type="organism name" value="c. elegans"/>
</dbReference>
<dbReference type="AGR" id="WB:WBGene00004210"/>
<dbReference type="CTD" id="173631"/>
<dbReference type="WormBase" id="Y110A2AL.8a">
    <molecule id="H2L0G5-2"/>
    <property type="protein sequence ID" value="CE37163"/>
    <property type="gene ID" value="WBGene00004210"/>
    <property type="gene designation" value="ptc-3"/>
</dbReference>
<dbReference type="WormBase" id="Y110A2AL.8b">
    <molecule id="H2L0G5-3"/>
    <property type="protein sequence ID" value="CE37164"/>
    <property type="gene ID" value="WBGene00004210"/>
    <property type="gene designation" value="ptc-3"/>
</dbReference>
<dbReference type="WormBase" id="Y110A2AL.8c">
    <molecule id="H2L0G5-1"/>
    <property type="protein sequence ID" value="CE42182"/>
    <property type="gene ID" value="WBGene00004210"/>
    <property type="gene designation" value="ptc-3"/>
</dbReference>
<dbReference type="eggNOG" id="KOG1935">
    <property type="taxonomic scope" value="Eukaryota"/>
</dbReference>
<dbReference type="InParanoid" id="H2L0G5"/>
<dbReference type="OMA" id="PINHHSF"/>
<dbReference type="OrthoDB" id="5873834at2759"/>
<dbReference type="PhylomeDB" id="H2L0G5"/>
<dbReference type="Reactome" id="R-CEL-5632684">
    <property type="pathway name" value="Hedgehog 'on' state"/>
</dbReference>
<dbReference type="PRO" id="PR:H2L0G5"/>
<dbReference type="Proteomes" id="UP000001940">
    <property type="component" value="Chromosome II"/>
</dbReference>
<dbReference type="Bgee" id="WBGene00004210">
    <property type="expression patterns" value="Expressed in larva and 3 other cell types or tissues"/>
</dbReference>
<dbReference type="GO" id="GO:0005912">
    <property type="term" value="C:adherens junction"/>
    <property type="evidence" value="ECO:0007669"/>
    <property type="project" value="UniProtKB-SubCell"/>
</dbReference>
<dbReference type="GO" id="GO:0016324">
    <property type="term" value="C:apical plasma membrane"/>
    <property type="evidence" value="ECO:0000314"/>
    <property type="project" value="WormBase"/>
</dbReference>
<dbReference type="GO" id="GO:0031410">
    <property type="term" value="C:cytoplasmic vesicle"/>
    <property type="evidence" value="ECO:0000314"/>
    <property type="project" value="WormBase"/>
</dbReference>
<dbReference type="GO" id="GO:0005886">
    <property type="term" value="C:plasma membrane"/>
    <property type="evidence" value="ECO:0000318"/>
    <property type="project" value="GO_Central"/>
</dbReference>
<dbReference type="GO" id="GO:0097108">
    <property type="term" value="F:hedgehog family protein binding"/>
    <property type="evidence" value="ECO:0000318"/>
    <property type="project" value="GO_Central"/>
</dbReference>
<dbReference type="GO" id="GO:0008158">
    <property type="term" value="F:hedgehog receptor activity"/>
    <property type="evidence" value="ECO:0000318"/>
    <property type="project" value="GO_Central"/>
</dbReference>
<dbReference type="GO" id="GO:0005119">
    <property type="term" value="F:smoothened binding"/>
    <property type="evidence" value="ECO:0000318"/>
    <property type="project" value="GO_Central"/>
</dbReference>
<dbReference type="GO" id="GO:0018996">
    <property type="term" value="P:molting cycle, collagen and cuticulin-based cuticle"/>
    <property type="evidence" value="ECO:0000315"/>
    <property type="project" value="WormBase"/>
</dbReference>
<dbReference type="GO" id="GO:0045879">
    <property type="term" value="P:negative regulation of smoothened signaling pathway"/>
    <property type="evidence" value="ECO:0000318"/>
    <property type="project" value="GO_Central"/>
</dbReference>
<dbReference type="FunFam" id="1.20.1640.10:FF:000031">
    <property type="entry name" value="PaTChed family"/>
    <property type="match status" value="1"/>
</dbReference>
<dbReference type="FunFam" id="1.20.1640.10:FF:000043">
    <property type="entry name" value="Protein CBR-PTC-3"/>
    <property type="match status" value="1"/>
</dbReference>
<dbReference type="Gene3D" id="1.20.1640.10">
    <property type="entry name" value="Multidrug efflux transporter AcrB transmembrane domain"/>
    <property type="match status" value="2"/>
</dbReference>
<dbReference type="InterPro" id="IPR053958">
    <property type="entry name" value="HMGCR/SNAP/NPC1-like_SSD"/>
</dbReference>
<dbReference type="InterPro" id="IPR000731">
    <property type="entry name" value="SSD"/>
</dbReference>
<dbReference type="PANTHER" id="PTHR46022">
    <property type="entry name" value="PROTEIN PATCHED"/>
    <property type="match status" value="1"/>
</dbReference>
<dbReference type="PANTHER" id="PTHR46022:SF6">
    <property type="entry name" value="PROTEIN PATCHED HOMOLOG 3"/>
    <property type="match status" value="1"/>
</dbReference>
<dbReference type="Pfam" id="PF12349">
    <property type="entry name" value="Sterol-sensing"/>
    <property type="match status" value="1"/>
</dbReference>
<dbReference type="SUPFAM" id="SSF82866">
    <property type="entry name" value="Multidrug efflux transporter AcrB transmembrane domain"/>
    <property type="match status" value="2"/>
</dbReference>
<dbReference type="PROSITE" id="PS50156">
    <property type="entry name" value="SSD"/>
    <property type="match status" value="1"/>
</dbReference>
<accession>H2L0G5</accession>
<accession>H2L0G4</accession>
<accession>Q6AW16</accession>
<reference evidence="7" key="1">
    <citation type="journal article" date="1998" name="Science">
        <title>Genome sequence of the nematode C. elegans: a platform for investigating biology.</title>
        <authorList>
            <consortium name="The C. elegans sequencing consortium"/>
        </authorList>
    </citation>
    <scope>NUCLEOTIDE SEQUENCE [LARGE SCALE GENOMIC DNA]</scope>
    <source>
        <strain evidence="7">Bristol N2</strain>
    </source>
</reference>
<reference evidence="6" key="2">
    <citation type="journal article" date="2011" name="Dev. Biol.">
        <title>C. elegans patched-3 is an essential gene implicated in osmoregulation and requiring an intact permease transporter domain.</title>
        <authorList>
            <person name="Soloviev A."/>
            <person name="Gallagher J."/>
            <person name="Marnef A."/>
            <person name="Kuwabara P.E."/>
        </authorList>
    </citation>
    <scope>FUNCTION</scope>
    <scope>SUBCELLULAR LOCATION</scope>
    <scope>TISSUE SPECIFICITY</scope>
    <scope>DEVELOPMENTAL STAGE</scope>
    <scope>DISRUPTION PHENOTYPE</scope>
    <scope>MUTAGENESIS OF ASP-706 AND ASP-789</scope>
</reference>
<keyword id="KW-0025">Alternative splicing</keyword>
<keyword id="KW-0965">Cell junction</keyword>
<keyword id="KW-1003">Cell membrane</keyword>
<keyword id="KW-0325">Glycoprotein</keyword>
<keyword id="KW-0472">Membrane</keyword>
<keyword id="KW-1185">Reference proteome</keyword>
<keyword id="KW-0812">Transmembrane</keyword>
<keyword id="KW-1133">Transmembrane helix</keyword>
<comment type="function">
    <text evidence="5">Regulates osmosis during embryonic development. Required for larval development and in particular is involved in larval molting.</text>
</comment>
<comment type="subcellular location">
    <subcellularLocation>
        <location evidence="5">Apical cell membrane</location>
        <topology evidence="1">Multi-pass membrane protein</topology>
    </subcellularLocation>
    <subcellularLocation>
        <location evidence="5">Cell junction</location>
        <location evidence="5">Adherens junction</location>
    </subcellularLocation>
    <text evidence="5">Co-localizes with ajm-1, an adherens junction marker in hypodermal cells and vulval toroids.</text>
</comment>
<comment type="alternative products">
    <event type="alternative splicing"/>
    <isoform>
        <id>H2L0G5-1</id>
        <name evidence="10">c</name>
        <sequence type="displayed"/>
    </isoform>
    <isoform>
        <id>H2L0G5-2</id>
        <name evidence="8">a</name>
        <sequence type="described" ref="VSP_058384"/>
    </isoform>
    <isoform>
        <id>H2L0G5-3</id>
        <name evidence="9">b</name>
        <sequence type="described" ref="VSP_058384 VSP_058385"/>
    </isoform>
</comment>
<comment type="tissue specificity">
    <text evidence="5">In males, expressed in the precursor and mature sensory rays, the cloaca, and pre-anal ganglia and cephalic neurons. Also expressed in five cells in the valve region between the seminal vesicle and vas deferens of the somatic gonad.</text>
</comment>
<comment type="developmental stage">
    <text evidence="5">Expressed in the hypodermis of embryos prior to hatching and expression is enhanced in the hypodermis before each molt. Expressed during larval development in the excretory duct at the L1 stage, and during morphogenesis of the somatic gonad and vulva during the L3 and L4 stages with prominent expression in the uterine seam cell and toroidal vulE and vulD cells.</text>
</comment>
<comment type="disruption phenotype">
    <text evidence="5">Embryonic lethal with embryos displaying a fluid-filled appearance and dying at hatching. RNAi-mediated knockdown results in high levels of embryonic and larval lethality. Dead and dying mutants do not respond to touch, display extensive vacuolation, molting defects which include unshed cuticles and in particular male specific molting defects that prevent unfurling of the mature tail rays. Surviving mutants are shorter in length and display defective egg-laying and abnormal vulval morphogenesis.</text>
</comment>
<comment type="similarity">
    <text evidence="6">Belongs to the patched family.</text>
</comment>
<protein>
    <recommendedName>
        <fullName evidence="6">Protein patched homolog 3</fullName>
    </recommendedName>
</protein>
<proteinExistence type="evidence at protein level"/>
<organism evidence="7">
    <name type="scientific">Caenorhabditis elegans</name>
    <dbReference type="NCBI Taxonomy" id="6239"/>
    <lineage>
        <taxon>Eukaryota</taxon>
        <taxon>Metazoa</taxon>
        <taxon>Ecdysozoa</taxon>
        <taxon>Nematoda</taxon>
        <taxon>Chromadorea</taxon>
        <taxon>Rhabditida</taxon>
        <taxon>Rhabditina</taxon>
        <taxon>Rhabditomorpha</taxon>
        <taxon>Rhabditoidea</taxon>
        <taxon>Rhabditidae</taxon>
        <taxon>Peloderinae</taxon>
        <taxon>Caenorhabditis</taxon>
    </lineage>
</organism>
<sequence length="1367" mass="153280">MSFPDEETDLLSEAKHCIRNVIHRTHRKFLENRLIGNFDSEDFSDAWKKKFAHAPTWCDADMSLQQIKRGKAVGNTVALTARAFFQLWLFRIGCFVQRWAWSTIFISLFLYCLCLGGLRHVTIETDLVKLWVSEGGRLNEEMGYLGQVKFERESGHLVHKVKRAVEQTTEPPAPAVKAEVRRGPELPKENGLGGGFQVVIQTPSFDGQNILSKEALQQHTKLMEEISTYEVKMFNETWTLSDICFKPPGPSFNSGPLAGIMSKLLDKIIPCIWITPIDCYWDGAKPLGPNPPLNLGPEVASFVSSLPPGNVTWKNLNPTSVIKEVGTLFDLGPIGNFFERAGIDGAYLDRPCIDPLEEECPKSAPNYFDRCHALTKFNEWNMAKAMSEQVTLERKIIPKDDGKSDIAETILNDIFGKKRRKRQADTTTKKPATKKDEDYYEYEDDADYLAGIANSTIAKKNPEKEAKDLLCLEYGSSLLKWMQENPERLGEFLTKEEMPDYPNYGDVMTGGCKGFGKKIMEWPEDLIIGGIQRDNGKLVSAEALQSVFLVSGAYDVFARIKNDKTDSHPGLDRHHFQPWMAGEIISTWQRNFTKRLYSHELNRERRQFHPLASTSIADMLEEFSQFNYIIIVIGYILMVIYAAFTQGRFQGWWLAVQSNVALAICGVILVTISSICGLGFATHLGINFNAATTQVVPFLSLGLGIDDMFLLLHNYDEIINICNKNEIGVLLKETGMSVMLTSINNILAFISGYVLPIPALRSFCSQTAILLAFNLIFLMFIFPAMIGIDLRRQRKGKRDLAYCSRGNPQMATSQSVPSNVSNMSSRAELAGYEKQADEYKRHEPWYTVGGFLNKIYIPALKNNVVKACVLIGTTTAVVFGLYGMYTSTLGLELADVLPEHTPPAAFLRAREQYFSFYPMFAVLRGDKLDIPNQQQLIEEYRAQLGSSKFMIKAEGKLQPYWMSMLRVWLQSLDMALEKDLAAGKFDLTNGNPIKVNGEKPSPESMIAARLVCSFGTNYNCDGRLGKMKMVENEVINPEGFYNYLTGWFNVDNMMYYVSQASFYPTPPGWEYNEKLAKVVPAAEPLLYSQMPFYQNDLIDTPAIVKMIEEIRATCEEYSERGLSNHPSGIAFTFWEQYLTLRWNLFQAICIIALAVFCVISILMFNPWAATLIMCIVVITTIELGGFMGLMGIKMNPISAVTLICAVGIGVEFTAHVELAFLTALGTIDQRLESCLQHMFVPVYHGAISTFLGVVMLVFSEFDFVVTYFFYTMTLLVALGVFNGLCVLPVILTLVGPKPELTPTDGSSVLPPPPPLRQQYAEKSGGVEGGMRKRKEKRPAEVEMSARDSPSTSSASHSSDDESSPAHK</sequence>
<feature type="chain" id="PRO_0000436535" description="Protein patched homolog 3" evidence="6">
    <location>
        <begin position="1"/>
        <end position="1367"/>
    </location>
</feature>
<feature type="topological domain" description="Cytoplasmic" evidence="6">
    <location>
        <begin position="1"/>
        <end position="97"/>
    </location>
</feature>
<feature type="transmembrane region" description="Helical" evidence="1">
    <location>
        <begin position="98"/>
        <end position="118"/>
    </location>
</feature>
<feature type="topological domain" description="Extracellular" evidence="6">
    <location>
        <begin position="119"/>
        <end position="625"/>
    </location>
</feature>
<feature type="transmembrane region" description="Helical" evidence="1">
    <location>
        <begin position="626"/>
        <end position="646"/>
    </location>
</feature>
<feature type="topological domain" description="Cytoplasmic" evidence="6">
    <location>
        <begin position="647"/>
        <end position="659"/>
    </location>
</feature>
<feature type="transmembrane region" description="Helical" evidence="1">
    <location>
        <begin position="660"/>
        <end position="680"/>
    </location>
</feature>
<feature type="topological domain" description="Extracellular" evidence="6">
    <location>
        <begin position="681"/>
        <end position="694"/>
    </location>
</feature>
<feature type="transmembrane region" description="Helical" evidence="1">
    <location>
        <begin position="695"/>
        <end position="715"/>
    </location>
</feature>
<feature type="topological domain" description="Cytoplasmic" evidence="6">
    <location>
        <begin position="716"/>
        <end position="737"/>
    </location>
</feature>
<feature type="transmembrane region" description="Helical" evidence="1">
    <location>
        <begin position="738"/>
        <end position="758"/>
    </location>
</feature>
<feature type="topological domain" description="Extracellular" evidence="6">
    <location>
        <begin position="759"/>
        <end position="767"/>
    </location>
</feature>
<feature type="transmembrane region" description="Helical" evidence="1">
    <location>
        <begin position="768"/>
        <end position="788"/>
    </location>
</feature>
<feature type="topological domain" description="Cytoplasmic" evidence="6">
    <location>
        <begin position="789"/>
        <end position="863"/>
    </location>
</feature>
<feature type="transmembrane region" description="Helical" evidence="1">
    <location>
        <begin position="864"/>
        <end position="884"/>
    </location>
</feature>
<feature type="topological domain" description="Extracellular" evidence="6">
    <location>
        <begin position="885"/>
        <end position="1143"/>
    </location>
</feature>
<feature type="transmembrane region" description="Helical" evidence="1">
    <location>
        <begin position="1144"/>
        <end position="1164"/>
    </location>
</feature>
<feature type="topological domain" description="Cytoplasmic" evidence="6">
    <location>
        <begin position="1165"/>
        <end position="1171"/>
    </location>
</feature>
<feature type="transmembrane region" description="Helical" evidence="1">
    <location>
        <begin position="1172"/>
        <end position="1192"/>
    </location>
</feature>
<feature type="topological domain" description="Extracellular" evidence="6">
    <location>
        <begin position="1193"/>
        <end position="1199"/>
    </location>
</feature>
<feature type="transmembrane region" description="Helical" evidence="1">
    <location>
        <begin position="1200"/>
        <end position="1220"/>
    </location>
</feature>
<feature type="topological domain" description="Cytoplasmic" evidence="6">
    <location>
        <begin position="1221"/>
        <end position="1237"/>
    </location>
</feature>
<feature type="transmembrane region" description="Helical" evidence="1">
    <location>
        <begin position="1238"/>
        <end position="1258"/>
    </location>
</feature>
<feature type="topological domain" description="Extracellular" evidence="6">
    <location>
        <begin position="1259"/>
        <end position="1273"/>
    </location>
</feature>
<feature type="transmembrane region" description="Helical" evidence="1">
    <location>
        <begin position="1274"/>
        <end position="1294"/>
    </location>
</feature>
<feature type="topological domain" description="Cytoplasmic" evidence="6">
    <location>
        <begin position="1295"/>
        <end position="1367"/>
    </location>
</feature>
<feature type="domain" description="SSD" evidence="2">
    <location>
        <begin position="627"/>
        <end position="788"/>
    </location>
</feature>
<feature type="region of interest" description="Disordered" evidence="4">
    <location>
        <begin position="1302"/>
        <end position="1367"/>
    </location>
</feature>
<feature type="compositionally biased region" description="Low complexity" evidence="4">
    <location>
        <begin position="1346"/>
        <end position="1356"/>
    </location>
</feature>
<feature type="glycosylation site" description="N-linked (GlcNAc...) asparagine" evidence="3">
    <location>
        <position position="235"/>
    </location>
</feature>
<feature type="glycosylation site" description="N-linked (GlcNAc...) asparagine" evidence="3">
    <location>
        <position position="310"/>
    </location>
</feature>
<feature type="glycosylation site" description="N-linked (GlcNAc...) asparagine" evidence="3">
    <location>
        <position position="454"/>
    </location>
</feature>
<feature type="glycosylation site" description="N-linked (GlcNAc...) asparagine" evidence="3">
    <location>
        <position position="591"/>
    </location>
</feature>
<feature type="splice variant" id="VSP_058384" description="In isoform a and isoform b." evidence="6">
    <original>SFPDEETDLLSEAKHCIRNVIHRTHRK</original>
    <variation>KVHSEQPPGKDEPGPIRR</variation>
    <location>
        <begin position="2"/>
        <end position="28"/>
    </location>
</feature>
<feature type="splice variant" id="VSP_058385" description="In isoform b." evidence="6">
    <original>N</original>
    <variation>NNTQ</variation>
    <location>
        <position position="822"/>
    </location>
</feature>
<feature type="mutagenesis site" description="No obvious phenotype." evidence="5">
    <original>D</original>
    <variation>A</variation>
    <location>
        <position position="706"/>
    </location>
</feature>
<feature type="mutagenesis site" description="Rescues lethality of the null mutant." evidence="5">
    <original>D</original>
    <variation>N</variation>
    <location>
        <position position="789"/>
    </location>
</feature>
<evidence type="ECO:0000255" key="1"/>
<evidence type="ECO:0000255" key="2">
    <source>
        <dbReference type="PROSITE-ProRule" id="PRU00199"/>
    </source>
</evidence>
<evidence type="ECO:0000255" key="3">
    <source>
        <dbReference type="PROSITE-ProRule" id="PRU00498"/>
    </source>
</evidence>
<evidence type="ECO:0000256" key="4">
    <source>
        <dbReference type="SAM" id="MobiDB-lite"/>
    </source>
</evidence>
<evidence type="ECO:0000269" key="5">
    <source>
    </source>
</evidence>
<evidence type="ECO:0000305" key="6"/>
<evidence type="ECO:0000312" key="7">
    <source>
        <dbReference type="Proteomes" id="UP000001940"/>
    </source>
</evidence>
<evidence type="ECO:0000312" key="8">
    <source>
        <dbReference type="WormBase" id="Y110A2AL.8a"/>
    </source>
</evidence>
<evidence type="ECO:0000312" key="9">
    <source>
        <dbReference type="WormBase" id="Y110A2AL.8b"/>
    </source>
</evidence>
<evidence type="ECO:0000312" key="10">
    <source>
        <dbReference type="WormBase" id="Y110A2AL.8c"/>
    </source>
</evidence>
<name>PTC3_CAEEL</name>